<keyword id="KW-0085">Behavior</keyword>
<keyword id="KW-1003">Cell membrane</keyword>
<keyword id="KW-0297">G-protein coupled receptor</keyword>
<keyword id="KW-0325">Glycoprotein</keyword>
<keyword id="KW-0449">Lipoprotein</keyword>
<keyword id="KW-0472">Membrane</keyword>
<keyword id="KW-0564">Palmitate</keyword>
<keyword id="KW-0675">Receptor</keyword>
<keyword id="KW-1185">Reference proteome</keyword>
<keyword id="KW-0770">Synapse</keyword>
<keyword id="KW-0771">Synaptosome</keyword>
<keyword id="KW-0807">Transducer</keyword>
<keyword id="KW-0812">Transmembrane</keyword>
<keyword id="KW-1133">Transmembrane helix</keyword>
<reference key="1">
    <citation type="journal article" date="1996" name="NeuroReport">
        <title>5-HT2B receptor mRNA in guinea pig superior cervical ganglion.</title>
        <authorList>
            <person name="Newberry N.R."/>
            <person name="Watkins C.J."/>
            <person name="Volenec A."/>
            <person name="Flanigan T.P."/>
        </authorList>
    </citation>
    <scope>NUCLEOTIDE SEQUENCE [MRNA]</scope>
    <source>
        <strain>Dunkin-Hartley</strain>
        <tissue>Superior cervical ganglion</tissue>
    </source>
</reference>
<sequence>CNQSTLQMLLEIFVWIGYVSSGVNPLVYTLFNKTFRDAFGRYITCNYKATKSVKTVRKCSNKIYFRNPMTENSKFFMKHGMRNGINSTMYQSPVRL</sequence>
<feature type="chain" id="PRO_0000068952" description="5-hydroxytryptamine receptor 2B">
    <location>
        <begin position="1" status="less than"/>
        <end position="96" status="greater than"/>
    </location>
</feature>
<feature type="topological domain" description="Extracellular" evidence="1">
    <location>
        <begin position="1" status="less than"/>
        <end position="8"/>
    </location>
</feature>
<feature type="transmembrane region" description="Helical; Name=7" evidence="1">
    <location>
        <begin position="9"/>
        <end position="30"/>
    </location>
</feature>
<feature type="topological domain" description="Cytoplasmic" evidence="1">
    <location>
        <begin position="31"/>
        <end position="96" status="greater than"/>
    </location>
</feature>
<feature type="short sequence motif" description="NPxxY motif; important for ligand-induced conformation changes and signaling" evidence="1">
    <location>
        <begin position="24"/>
        <end position="28"/>
    </location>
</feature>
<feature type="lipid moiety-binding region" description="S-palmitoyl cysteine" evidence="3">
    <location>
        <position position="45"/>
    </location>
</feature>
<feature type="glycosylation site" description="N-linked (GlcNAc...) asparagine" evidence="3">
    <location>
        <position position="2"/>
    </location>
</feature>
<feature type="non-terminal residue">
    <location>
        <position position="1"/>
    </location>
</feature>
<feature type="non-terminal residue">
    <location>
        <position position="96"/>
    </location>
</feature>
<comment type="function">
    <text evidence="1 2">G-protein coupled receptor for 5-hydroxytryptamine (serotonin). Also functions as a receptor for various ergot alkaloid derivatives and psychoactive substances. Ligand binding causes a conformation change that triggers signaling via guanine nucleotide-binding proteins (G proteins) and modulates the activity of downstream effectors. HTR2B is coupled to G(q)/G(11) G alpha proteins and activates phospholipase C-beta, releasing diacylglycerol (DAG) and inositol 1,4,5-trisphosphate (IP3) second messengers that modulate the activity of phosphatidylinositol 3-kinase and promote the release of Ca(2+) ions from intracellular stores, respectively. Beta-arrestin family members inhibit signaling via G proteins and mediate activation of alternative signaling pathways (By similarity). Plays a role in the regulation of dopamine and 5-hydroxytryptamine release, 5-hydroxytryptamine uptake and in the regulation of extracellular dopamine and 5-hydroxytryptamine levels, and thereby affects neural activity. May play a role in the perception of pain (By similarity). Plays a role in the regulation of behavior, including impulsive behavior (By similarity). Required for normal proliferation of embryonic cardiac myocytes and normal heart development. Protects cardiomyocytes against apoptosis. Plays a role in the adaptation of pulmonary arteries to chronic hypoxia. Plays a role in vasoconstriction. Required for normal osteoblast function and proliferation, and for maintaining normal bone density. Required for normal proliferation of the interstitial cells of Cajal in the intestine (By similarity).</text>
</comment>
<comment type="subunit">
    <text evidence="1">Interacts (via C-terminus) with MPDZ.</text>
</comment>
<comment type="subcellular location">
    <subcellularLocation>
        <location evidence="1">Cell membrane</location>
        <topology evidence="1">Multi-pass membrane protein</topology>
    </subcellularLocation>
    <subcellularLocation>
        <location evidence="2">Synapse</location>
        <location evidence="2">Synaptosome</location>
    </subcellularLocation>
</comment>
<comment type="domain">
    <text evidence="1">Ligands are bound in a hydrophobic pocket formed by the transmembrane helices.</text>
</comment>
<comment type="similarity">
    <text evidence="4">Belongs to the G-protein coupled receptor 1 family.</text>
</comment>
<accession>P97267</accession>
<gene>
    <name type="primary">HTR2B</name>
</gene>
<protein>
    <recommendedName>
        <fullName>5-hydroxytryptamine receptor 2B</fullName>
        <shortName>5-HT-2B</shortName>
        <shortName>5-HT2B</shortName>
    </recommendedName>
    <alternativeName>
        <fullName>Serotonin receptor 2B</fullName>
    </alternativeName>
</protein>
<evidence type="ECO:0000250" key="1">
    <source>
        <dbReference type="UniProtKB" id="P41595"/>
    </source>
</evidence>
<evidence type="ECO:0000250" key="2">
    <source>
        <dbReference type="UniProtKB" id="Q02152"/>
    </source>
</evidence>
<evidence type="ECO:0000255" key="3"/>
<evidence type="ECO:0000305" key="4"/>
<organism>
    <name type="scientific">Cavia porcellus</name>
    <name type="common">Guinea pig</name>
    <dbReference type="NCBI Taxonomy" id="10141"/>
    <lineage>
        <taxon>Eukaryota</taxon>
        <taxon>Metazoa</taxon>
        <taxon>Chordata</taxon>
        <taxon>Craniata</taxon>
        <taxon>Vertebrata</taxon>
        <taxon>Euteleostomi</taxon>
        <taxon>Mammalia</taxon>
        <taxon>Eutheria</taxon>
        <taxon>Euarchontoglires</taxon>
        <taxon>Glires</taxon>
        <taxon>Rodentia</taxon>
        <taxon>Hystricomorpha</taxon>
        <taxon>Caviidae</taxon>
        <taxon>Cavia</taxon>
    </lineage>
</organism>
<dbReference type="EMBL" id="U69635">
    <property type="protein sequence ID" value="AAB36680.1"/>
    <property type="molecule type" value="mRNA"/>
</dbReference>
<dbReference type="SMR" id="P97267"/>
<dbReference type="STRING" id="10141.ENSCPOP00000000383"/>
<dbReference type="GlyCosmos" id="P97267">
    <property type="glycosylation" value="1 site, No reported glycans"/>
</dbReference>
<dbReference type="eggNOG" id="KOG3656">
    <property type="taxonomic scope" value="Eukaryota"/>
</dbReference>
<dbReference type="HOGENOM" id="CLU_009579_11_3_1"/>
<dbReference type="InParanoid" id="P97267"/>
<dbReference type="Proteomes" id="UP000005447">
    <property type="component" value="Unassembled WGS sequence"/>
</dbReference>
<dbReference type="GO" id="GO:0043005">
    <property type="term" value="C:neuron projection"/>
    <property type="evidence" value="ECO:0007669"/>
    <property type="project" value="UniProtKB-KW"/>
</dbReference>
<dbReference type="GO" id="GO:0005886">
    <property type="term" value="C:plasma membrane"/>
    <property type="evidence" value="ECO:0007669"/>
    <property type="project" value="UniProtKB-SubCell"/>
</dbReference>
<dbReference type="GO" id="GO:0045202">
    <property type="term" value="C:synapse"/>
    <property type="evidence" value="ECO:0007669"/>
    <property type="project" value="UniProtKB-SubCell"/>
</dbReference>
<dbReference type="GO" id="GO:0004993">
    <property type="term" value="F:G protein-coupled serotonin receptor activity"/>
    <property type="evidence" value="ECO:0007669"/>
    <property type="project" value="InterPro"/>
</dbReference>
<dbReference type="GO" id="GO:0007507">
    <property type="term" value="P:heart development"/>
    <property type="evidence" value="ECO:0007669"/>
    <property type="project" value="InterPro"/>
</dbReference>
<dbReference type="GO" id="GO:0050795">
    <property type="term" value="P:regulation of behavior"/>
    <property type="evidence" value="ECO:0007669"/>
    <property type="project" value="InterPro"/>
</dbReference>
<dbReference type="GO" id="GO:0006939">
    <property type="term" value="P:smooth muscle contraction"/>
    <property type="evidence" value="ECO:0007669"/>
    <property type="project" value="InterPro"/>
</dbReference>
<dbReference type="GO" id="GO:0042310">
    <property type="term" value="P:vasoconstriction"/>
    <property type="evidence" value="ECO:0007669"/>
    <property type="project" value="InterPro"/>
</dbReference>
<dbReference type="Gene3D" id="1.20.1070.10">
    <property type="entry name" value="Rhodopsin 7-helix transmembrane proteins"/>
    <property type="match status" value="1"/>
</dbReference>
<dbReference type="InterPro" id="IPR000482">
    <property type="entry name" value="5HT2B_rcpt"/>
</dbReference>
<dbReference type="PRINTS" id="PR00651">
    <property type="entry name" value="5HT2BRECEPTR"/>
</dbReference>
<dbReference type="SUPFAM" id="SSF81321">
    <property type="entry name" value="Family A G protein-coupled receptor-like"/>
    <property type="match status" value="1"/>
</dbReference>
<proteinExistence type="evidence at transcript level"/>
<name>5HT2B_CAVPO</name>